<name>END4_BACLD</name>
<proteinExistence type="inferred from homology"/>
<reference key="1">
    <citation type="journal article" date="2004" name="J. Mol. Microbiol. Biotechnol.">
        <title>The complete genome sequence of Bacillus licheniformis DSM13, an organism with great industrial potential.</title>
        <authorList>
            <person name="Veith B."/>
            <person name="Herzberg C."/>
            <person name="Steckel S."/>
            <person name="Feesche J."/>
            <person name="Maurer K.H."/>
            <person name="Ehrenreich P."/>
            <person name="Baeumer S."/>
            <person name="Henne A."/>
            <person name="Liesegang H."/>
            <person name="Merkl R."/>
            <person name="Ehrenreich A."/>
            <person name="Gottschalk G."/>
        </authorList>
    </citation>
    <scope>NUCLEOTIDE SEQUENCE [LARGE SCALE GENOMIC DNA]</scope>
    <source>
        <strain>ATCC 14580 / DSM 13 / JCM 2505 / CCUG 7422 / NBRC 12200 / NCIMB 9375 / NCTC 10341 / NRRL NRS-1264 / Gibson 46</strain>
    </source>
</reference>
<reference key="2">
    <citation type="journal article" date="2004" name="Genome Biol.">
        <title>Complete genome sequence of the industrial bacterium Bacillus licheniformis and comparisons with closely related Bacillus species.</title>
        <authorList>
            <person name="Rey M.W."/>
            <person name="Ramaiya P."/>
            <person name="Nelson B.A."/>
            <person name="Brody-Karpin S.D."/>
            <person name="Zaretsky E.J."/>
            <person name="Tang M."/>
            <person name="Lopez de Leon A."/>
            <person name="Xiang H."/>
            <person name="Gusti V."/>
            <person name="Clausen I.G."/>
            <person name="Olsen P.B."/>
            <person name="Rasmussen M.D."/>
            <person name="Andersen J.T."/>
            <person name="Joergensen P.L."/>
            <person name="Larsen T.S."/>
            <person name="Sorokin A."/>
            <person name="Bolotin A."/>
            <person name="Lapidus A."/>
            <person name="Galleron N."/>
            <person name="Ehrlich S.D."/>
            <person name="Berka R.M."/>
        </authorList>
    </citation>
    <scope>NUCLEOTIDE SEQUENCE [LARGE SCALE GENOMIC DNA]</scope>
    <source>
        <strain>ATCC 14580 / DSM 13 / JCM 2505 / CCUG 7422 / NBRC 12200 / NCIMB 9375 / NCTC 10341 / NRRL NRS-1264 / Gibson 46</strain>
    </source>
</reference>
<gene>
    <name evidence="1" type="primary">nfo</name>
    <name type="ordered locus">BLi02692</name>
    <name type="ordered locus">BL03699</name>
</gene>
<organism>
    <name type="scientific">Bacillus licheniformis (strain ATCC 14580 / DSM 13 / JCM 2505 / CCUG 7422 / NBRC 12200 / NCIMB 9375 / NCTC 10341 / NRRL NRS-1264 / Gibson 46)</name>
    <dbReference type="NCBI Taxonomy" id="279010"/>
    <lineage>
        <taxon>Bacteria</taxon>
        <taxon>Bacillati</taxon>
        <taxon>Bacillota</taxon>
        <taxon>Bacilli</taxon>
        <taxon>Bacillales</taxon>
        <taxon>Bacillaceae</taxon>
        <taxon>Bacillus</taxon>
    </lineage>
</organism>
<evidence type="ECO:0000255" key="1">
    <source>
        <dbReference type="HAMAP-Rule" id="MF_00152"/>
    </source>
</evidence>
<comment type="function">
    <text evidence="1">Endonuclease IV plays a role in DNA repair. It cleaves phosphodiester bonds at apurinic or apyrimidinic (AP) sites, generating a 3'-hydroxyl group and a 5'-terminal sugar phosphate.</text>
</comment>
<comment type="catalytic activity">
    <reaction evidence="1">
        <text>Endonucleolytic cleavage to 5'-phosphooligonucleotide end-products.</text>
        <dbReference type="EC" id="3.1.21.2"/>
    </reaction>
</comment>
<comment type="cofactor">
    <cofactor evidence="1">
        <name>Zn(2+)</name>
        <dbReference type="ChEBI" id="CHEBI:29105"/>
    </cofactor>
    <text evidence="1">Binds 3 Zn(2+) ions.</text>
</comment>
<comment type="similarity">
    <text evidence="1">Belongs to the AP endonuclease 2 family.</text>
</comment>
<protein>
    <recommendedName>
        <fullName evidence="1">Probable endonuclease 4</fullName>
        <ecNumber evidence="1">3.1.21.2</ecNumber>
    </recommendedName>
    <alternativeName>
        <fullName evidence="1">Endodeoxyribonuclease IV</fullName>
    </alternativeName>
    <alternativeName>
        <fullName evidence="1">Endonuclease IV</fullName>
    </alternativeName>
</protein>
<sequence>MLKIGSHVSMSGKHMLLAASQEASSYGANTFMIYTGAPQNTRRKKIEDLNIEAGRAHMEENGISDIVVHAPYIINIANTTNPATFELGVEFLRSEIERTSAIGARQIVLHPGAHVGAGAETGIQKIIEGLNEVIDPNQNVQIALETMAGKGSECGRTFEELAQIIDGVTHNEHLSVCFDTCHTHDAGYDVVSDFDGVLNEFDKIVGIDRLKVLHINDSKNVRGARKDRHENIGFGEIGFDALQYIVHHDQLKDIPKILETPYVGEDKKNKKPPYRFEIEMLKNKQFDEELLEKIKQQ</sequence>
<accession>Q65HA0</accession>
<accession>Q62SQ6</accession>
<dbReference type="EC" id="3.1.21.2" evidence="1"/>
<dbReference type="EMBL" id="CP000002">
    <property type="protein sequence ID" value="AAU24203.1"/>
    <property type="molecule type" value="Genomic_DNA"/>
</dbReference>
<dbReference type="EMBL" id="AE017333">
    <property type="protein sequence ID" value="AAU41564.1"/>
    <property type="molecule type" value="Genomic_DNA"/>
</dbReference>
<dbReference type="RefSeq" id="WP_003183567.1">
    <property type="nucleotide sequence ID" value="NC_006322.1"/>
</dbReference>
<dbReference type="SMR" id="Q65HA0"/>
<dbReference type="STRING" id="279010.BL03699"/>
<dbReference type="KEGG" id="bld:BLi02692"/>
<dbReference type="KEGG" id="bli:BL03699"/>
<dbReference type="eggNOG" id="COG0648">
    <property type="taxonomic scope" value="Bacteria"/>
</dbReference>
<dbReference type="HOGENOM" id="CLU_025885_4_1_9"/>
<dbReference type="Proteomes" id="UP000000606">
    <property type="component" value="Chromosome"/>
</dbReference>
<dbReference type="GO" id="GO:0008833">
    <property type="term" value="F:deoxyribonuclease IV (phage-T4-induced) activity"/>
    <property type="evidence" value="ECO:0007669"/>
    <property type="project" value="UniProtKB-UniRule"/>
</dbReference>
<dbReference type="GO" id="GO:0003677">
    <property type="term" value="F:DNA binding"/>
    <property type="evidence" value="ECO:0007669"/>
    <property type="project" value="InterPro"/>
</dbReference>
<dbReference type="GO" id="GO:0003906">
    <property type="term" value="F:DNA-(apurinic or apyrimidinic site) endonuclease activity"/>
    <property type="evidence" value="ECO:0007669"/>
    <property type="project" value="TreeGrafter"/>
</dbReference>
<dbReference type="GO" id="GO:0008081">
    <property type="term" value="F:phosphoric diester hydrolase activity"/>
    <property type="evidence" value="ECO:0007669"/>
    <property type="project" value="TreeGrafter"/>
</dbReference>
<dbReference type="GO" id="GO:0008270">
    <property type="term" value="F:zinc ion binding"/>
    <property type="evidence" value="ECO:0007669"/>
    <property type="project" value="UniProtKB-UniRule"/>
</dbReference>
<dbReference type="GO" id="GO:0006284">
    <property type="term" value="P:base-excision repair"/>
    <property type="evidence" value="ECO:0007669"/>
    <property type="project" value="TreeGrafter"/>
</dbReference>
<dbReference type="CDD" id="cd00019">
    <property type="entry name" value="AP2Ec"/>
    <property type="match status" value="1"/>
</dbReference>
<dbReference type="FunFam" id="3.20.20.150:FF:000001">
    <property type="entry name" value="Probable endonuclease 4"/>
    <property type="match status" value="1"/>
</dbReference>
<dbReference type="Gene3D" id="3.20.20.150">
    <property type="entry name" value="Divalent-metal-dependent TIM barrel enzymes"/>
    <property type="match status" value="1"/>
</dbReference>
<dbReference type="HAMAP" id="MF_00152">
    <property type="entry name" value="Nfo"/>
    <property type="match status" value="1"/>
</dbReference>
<dbReference type="InterPro" id="IPR001719">
    <property type="entry name" value="AP_endonuc_2"/>
</dbReference>
<dbReference type="InterPro" id="IPR018246">
    <property type="entry name" value="AP_endonuc_F2_Zn_BS"/>
</dbReference>
<dbReference type="InterPro" id="IPR036237">
    <property type="entry name" value="Xyl_isomerase-like_sf"/>
</dbReference>
<dbReference type="InterPro" id="IPR013022">
    <property type="entry name" value="Xyl_isomerase-like_TIM-brl"/>
</dbReference>
<dbReference type="NCBIfam" id="TIGR00587">
    <property type="entry name" value="nfo"/>
    <property type="match status" value="1"/>
</dbReference>
<dbReference type="NCBIfam" id="NF002196">
    <property type="entry name" value="PRK01060.1-1"/>
    <property type="match status" value="1"/>
</dbReference>
<dbReference type="PANTHER" id="PTHR21445:SF0">
    <property type="entry name" value="APURINIC-APYRIMIDINIC ENDONUCLEASE"/>
    <property type="match status" value="1"/>
</dbReference>
<dbReference type="PANTHER" id="PTHR21445">
    <property type="entry name" value="ENDONUCLEASE IV ENDODEOXYRIBONUCLEASE IV"/>
    <property type="match status" value="1"/>
</dbReference>
<dbReference type="Pfam" id="PF01261">
    <property type="entry name" value="AP_endonuc_2"/>
    <property type="match status" value="1"/>
</dbReference>
<dbReference type="SMART" id="SM00518">
    <property type="entry name" value="AP2Ec"/>
    <property type="match status" value="1"/>
</dbReference>
<dbReference type="SUPFAM" id="SSF51658">
    <property type="entry name" value="Xylose isomerase-like"/>
    <property type="match status" value="1"/>
</dbReference>
<dbReference type="PROSITE" id="PS00729">
    <property type="entry name" value="AP_NUCLEASE_F2_1"/>
    <property type="match status" value="1"/>
</dbReference>
<dbReference type="PROSITE" id="PS00730">
    <property type="entry name" value="AP_NUCLEASE_F2_2"/>
    <property type="match status" value="1"/>
</dbReference>
<dbReference type="PROSITE" id="PS00731">
    <property type="entry name" value="AP_NUCLEASE_F2_3"/>
    <property type="match status" value="1"/>
</dbReference>
<dbReference type="PROSITE" id="PS51432">
    <property type="entry name" value="AP_NUCLEASE_F2_4"/>
    <property type="match status" value="1"/>
</dbReference>
<keyword id="KW-0227">DNA damage</keyword>
<keyword id="KW-0234">DNA repair</keyword>
<keyword id="KW-0255">Endonuclease</keyword>
<keyword id="KW-0378">Hydrolase</keyword>
<keyword id="KW-0479">Metal-binding</keyword>
<keyword id="KW-0540">Nuclease</keyword>
<keyword id="KW-1185">Reference proteome</keyword>
<keyword id="KW-0862">Zinc</keyword>
<feature type="chain" id="PRO_1000011292" description="Probable endonuclease 4">
    <location>
        <begin position="1"/>
        <end position="297"/>
    </location>
</feature>
<feature type="binding site" evidence="1">
    <location>
        <position position="69"/>
    </location>
    <ligand>
        <name>Zn(2+)</name>
        <dbReference type="ChEBI" id="CHEBI:29105"/>
        <label>1</label>
    </ligand>
</feature>
<feature type="binding site" evidence="1">
    <location>
        <position position="110"/>
    </location>
    <ligand>
        <name>Zn(2+)</name>
        <dbReference type="ChEBI" id="CHEBI:29105"/>
        <label>1</label>
    </ligand>
</feature>
<feature type="binding site" evidence="1">
    <location>
        <position position="145"/>
    </location>
    <ligand>
        <name>Zn(2+)</name>
        <dbReference type="ChEBI" id="CHEBI:29105"/>
        <label>1</label>
    </ligand>
</feature>
<feature type="binding site" evidence="1">
    <location>
        <position position="145"/>
    </location>
    <ligand>
        <name>Zn(2+)</name>
        <dbReference type="ChEBI" id="CHEBI:29105"/>
        <label>2</label>
    </ligand>
</feature>
<feature type="binding site" evidence="1">
    <location>
        <position position="179"/>
    </location>
    <ligand>
        <name>Zn(2+)</name>
        <dbReference type="ChEBI" id="CHEBI:29105"/>
        <label>2</label>
    </ligand>
</feature>
<feature type="binding site" evidence="1">
    <location>
        <position position="182"/>
    </location>
    <ligand>
        <name>Zn(2+)</name>
        <dbReference type="ChEBI" id="CHEBI:29105"/>
        <label>3</label>
    </ligand>
</feature>
<feature type="binding site" evidence="1">
    <location>
        <position position="214"/>
    </location>
    <ligand>
        <name>Zn(2+)</name>
        <dbReference type="ChEBI" id="CHEBI:29105"/>
        <label>2</label>
    </ligand>
</feature>
<feature type="binding site" evidence="1">
    <location>
        <position position="227"/>
    </location>
    <ligand>
        <name>Zn(2+)</name>
        <dbReference type="ChEBI" id="CHEBI:29105"/>
        <label>3</label>
    </ligand>
</feature>
<feature type="binding site" evidence="1">
    <location>
        <position position="229"/>
    </location>
    <ligand>
        <name>Zn(2+)</name>
        <dbReference type="ChEBI" id="CHEBI:29105"/>
        <label>3</label>
    </ligand>
</feature>
<feature type="binding site" evidence="1">
    <location>
        <position position="259"/>
    </location>
    <ligand>
        <name>Zn(2+)</name>
        <dbReference type="ChEBI" id="CHEBI:29105"/>
        <label>2</label>
    </ligand>
</feature>